<feature type="chain" id="PRO_0000222527" description="Suppressor of RNA silencing p3">
    <location>
        <begin position="1"/>
        <end position="197"/>
    </location>
</feature>
<name>VSR_MSTV</name>
<reference key="1">
    <citation type="journal article" date="1991" name="Virology">
        <title>Nucleotide sequence and RNA hybridization analyses reveal an ambisense coding strategy for maize stripe virus RNA3.</title>
        <authorList>
            <person name="Huiet L."/>
            <person name="Klaassen V."/>
            <person name="Tsai J.H."/>
            <person name="Falk B.W."/>
        </authorList>
    </citation>
    <scope>NUCLEOTIDE SEQUENCE [GENOMIC RNA]</scope>
</reference>
<protein>
    <recommendedName>
        <fullName>Suppressor of RNA silencing p3</fullName>
    </recommendedName>
    <alternativeName>
        <fullName>Protein NS3</fullName>
    </alternativeName>
    <alternativeName>
        <fullName>Protein p3</fullName>
    </alternativeName>
</protein>
<evidence type="ECO:0000250" key="1"/>
<evidence type="ECO:0000305" key="2"/>
<organismHost>
    <name type="scientific">Rottboellia</name>
    <dbReference type="NCBI Taxonomy" id="300124"/>
</organismHost>
<organismHost>
    <name type="scientific">Sorghum bicolor</name>
    <name type="common">Sorghum</name>
    <name type="synonym">Sorghum vulgare</name>
    <dbReference type="NCBI Taxonomy" id="4558"/>
</organismHost>
<organismHost>
    <name type="scientific">Zea mays</name>
    <name type="common">Maize</name>
    <dbReference type="NCBI Taxonomy" id="4577"/>
</organismHost>
<sequence length="197" mass="22732">MNFYTSSVGVRQYDHSLLVLNDLTNIHITCEDVHCSAKLLCYIYDVYKSRYPSIDEHSFLRMLKGPDDAEILSTFLRTIIWILSHDRDFPDEFRIPATALVSVYIKYYSDLKPRAPTTNCWTCRMSKNNLPFQVPSIKGFPAEAELYIVPISDHDGKTIEFSGMKTLYKSPSKKKHNYVISSDMPPLSARYTVWDGK</sequence>
<organism>
    <name type="scientific">Maize stripe virus</name>
    <name type="common">MStV</name>
    <dbReference type="NCBI Taxonomy" id="3052767"/>
    <lineage>
        <taxon>Viruses</taxon>
        <taxon>Riboviria</taxon>
        <taxon>Orthornavirae</taxon>
        <taxon>Negarnaviricota</taxon>
        <taxon>Polyploviricotina</taxon>
        <taxon>Ellioviricetes</taxon>
        <taxon>Bunyavirales</taxon>
        <taxon>Phenuiviridae</taxon>
        <taxon>Tenuivirus</taxon>
    </lineage>
</organism>
<dbReference type="EMBL" id="M57426">
    <property type="protein sequence ID" value="AAA46636.1"/>
    <property type="molecule type" value="Genomic_RNA"/>
</dbReference>
<dbReference type="PIR" id="A39146">
    <property type="entry name" value="WMWRMS"/>
</dbReference>
<dbReference type="SMR" id="P27208"/>
<dbReference type="OrthoDB" id="8193at10239"/>
<dbReference type="Proteomes" id="UP000234995">
    <property type="component" value="Genome"/>
</dbReference>
<dbReference type="GO" id="GO:0030430">
    <property type="term" value="C:host cell cytoplasm"/>
    <property type="evidence" value="ECO:0007669"/>
    <property type="project" value="UniProtKB-SubCell"/>
</dbReference>
<dbReference type="GO" id="GO:0003723">
    <property type="term" value="F:RNA binding"/>
    <property type="evidence" value="ECO:0007669"/>
    <property type="project" value="UniProtKB-KW"/>
</dbReference>
<dbReference type="GO" id="GO:0052170">
    <property type="term" value="P:symbiont-mediated suppression of host innate immune response"/>
    <property type="evidence" value="ECO:0007669"/>
    <property type="project" value="UniProtKB-KW"/>
</dbReference>
<dbReference type="Gene3D" id="1.20.1440.190">
    <property type="entry name" value="Tenuivirus movement protein"/>
    <property type="match status" value="1"/>
</dbReference>
<dbReference type="InterPro" id="IPR007974">
    <property type="entry name" value="Tenui_movmnt_prot"/>
</dbReference>
<dbReference type="InterPro" id="IPR043105">
    <property type="entry name" value="Tenui_NS3"/>
</dbReference>
<dbReference type="Pfam" id="PF05310">
    <property type="entry name" value="Tenui_NS3"/>
    <property type="match status" value="1"/>
</dbReference>
<accession>P27208</accession>
<proteinExistence type="inferred from homology"/>
<gene>
    <name type="ORF">p3</name>
</gene>
<keyword id="KW-1035">Host cytoplasm</keyword>
<keyword id="KW-0945">Host-virus interaction</keyword>
<keyword id="KW-1090">Inhibition of host innate immune response by virus</keyword>
<keyword id="KW-0694">RNA-binding</keyword>
<keyword id="KW-0941">Suppressor of RNA silencing</keyword>
<keyword id="KW-0899">Viral immunoevasion</keyword>
<comment type="function">
    <text evidence="1">Acts as a suppressor of RNA-mediated gene silencing, also known as post-transcriptional gene silencing (PTGS), presumably through the binding of dsRNA.</text>
</comment>
<comment type="subunit">
    <text evidence="1">Homodimer.</text>
</comment>
<comment type="subcellular location">
    <subcellularLocation>
        <location evidence="1">Host cytoplasm</location>
    </subcellularLocation>
</comment>
<comment type="similarity">
    <text evidence="2">Belongs to the tenuiviruses p3 protein family.</text>
</comment>